<keyword id="KW-0963">Cytoplasm</keyword>
<keyword id="KW-0489">Methyltransferase</keyword>
<keyword id="KW-0545">Nucleotide biosynthesis</keyword>
<keyword id="KW-1185">Reference proteome</keyword>
<keyword id="KW-0808">Transferase</keyword>
<dbReference type="EC" id="2.1.1.45" evidence="1"/>
<dbReference type="EMBL" id="CU469464">
    <property type="protein sequence ID" value="CAP18507.1"/>
    <property type="molecule type" value="Genomic_DNA"/>
</dbReference>
<dbReference type="SMR" id="B3QZX0"/>
<dbReference type="STRING" id="37692.ATP_00320"/>
<dbReference type="KEGG" id="pml:ATP_00320"/>
<dbReference type="eggNOG" id="COG0207">
    <property type="taxonomic scope" value="Bacteria"/>
</dbReference>
<dbReference type="HOGENOM" id="CLU_021669_0_0_14"/>
<dbReference type="UniPathway" id="UPA00575"/>
<dbReference type="Proteomes" id="UP000002020">
    <property type="component" value="Chromosome"/>
</dbReference>
<dbReference type="GO" id="GO:0005829">
    <property type="term" value="C:cytosol"/>
    <property type="evidence" value="ECO:0007669"/>
    <property type="project" value="TreeGrafter"/>
</dbReference>
<dbReference type="GO" id="GO:0004799">
    <property type="term" value="F:thymidylate synthase activity"/>
    <property type="evidence" value="ECO:0007669"/>
    <property type="project" value="UniProtKB-UniRule"/>
</dbReference>
<dbReference type="GO" id="GO:0006231">
    <property type="term" value="P:dTMP biosynthetic process"/>
    <property type="evidence" value="ECO:0007669"/>
    <property type="project" value="UniProtKB-UniRule"/>
</dbReference>
<dbReference type="GO" id="GO:0006235">
    <property type="term" value="P:dTTP biosynthetic process"/>
    <property type="evidence" value="ECO:0007669"/>
    <property type="project" value="UniProtKB-UniRule"/>
</dbReference>
<dbReference type="GO" id="GO:0032259">
    <property type="term" value="P:methylation"/>
    <property type="evidence" value="ECO:0007669"/>
    <property type="project" value="UniProtKB-KW"/>
</dbReference>
<dbReference type="CDD" id="cd00351">
    <property type="entry name" value="TS_Pyrimidine_HMase"/>
    <property type="match status" value="1"/>
</dbReference>
<dbReference type="Gene3D" id="3.30.572.10">
    <property type="entry name" value="Thymidylate synthase/dCMP hydroxymethylase domain"/>
    <property type="match status" value="1"/>
</dbReference>
<dbReference type="HAMAP" id="MF_00008">
    <property type="entry name" value="Thymidy_synth_bact"/>
    <property type="match status" value="1"/>
</dbReference>
<dbReference type="InterPro" id="IPR045097">
    <property type="entry name" value="Thymidate_synth/dCMP_Mease"/>
</dbReference>
<dbReference type="InterPro" id="IPR023451">
    <property type="entry name" value="Thymidate_synth/dCMP_Mease_dom"/>
</dbReference>
<dbReference type="InterPro" id="IPR036926">
    <property type="entry name" value="Thymidate_synth/dCMP_Mease_sf"/>
</dbReference>
<dbReference type="InterPro" id="IPR000398">
    <property type="entry name" value="Thymidylate_synthase"/>
</dbReference>
<dbReference type="NCBIfam" id="NF002497">
    <property type="entry name" value="PRK01827.1-3"/>
    <property type="match status" value="1"/>
</dbReference>
<dbReference type="NCBIfam" id="TIGR03284">
    <property type="entry name" value="thym_sym"/>
    <property type="match status" value="1"/>
</dbReference>
<dbReference type="PANTHER" id="PTHR11548:SF9">
    <property type="entry name" value="THYMIDYLATE SYNTHASE"/>
    <property type="match status" value="1"/>
</dbReference>
<dbReference type="PANTHER" id="PTHR11548">
    <property type="entry name" value="THYMIDYLATE SYNTHASE 1"/>
    <property type="match status" value="1"/>
</dbReference>
<dbReference type="Pfam" id="PF00303">
    <property type="entry name" value="Thymidylat_synt"/>
    <property type="match status" value="1"/>
</dbReference>
<dbReference type="PRINTS" id="PR00108">
    <property type="entry name" value="THYMDSNTHASE"/>
</dbReference>
<dbReference type="SUPFAM" id="SSF55831">
    <property type="entry name" value="Thymidylate synthase/dCMP hydroxymethylase"/>
    <property type="match status" value="1"/>
</dbReference>
<evidence type="ECO:0000255" key="1">
    <source>
        <dbReference type="HAMAP-Rule" id="MF_00008"/>
    </source>
</evidence>
<gene>
    <name evidence="1" type="primary">thyA</name>
    <name type="ordered locus">ATP_00320</name>
</gene>
<feature type="chain" id="PRO_1000197255" description="Thymidylate synthase">
    <location>
        <begin position="1"/>
        <end position="288"/>
    </location>
</feature>
<feature type="active site" description="Nucleophile" evidence="1">
    <location>
        <position position="170"/>
    </location>
</feature>
<feature type="binding site" description="in other chain" evidence="1">
    <location>
        <position position="21"/>
    </location>
    <ligand>
        <name>dUMP</name>
        <dbReference type="ChEBI" id="CHEBI:246422"/>
        <note>ligand shared between dimeric partners</note>
    </ligand>
</feature>
<feature type="binding site" evidence="1">
    <location>
        <position position="51"/>
    </location>
    <ligand>
        <name>(6R)-5,10-methylene-5,6,7,8-tetrahydrofolate</name>
        <dbReference type="ChEBI" id="CHEBI:15636"/>
    </ligand>
</feature>
<feature type="binding site" evidence="1">
    <location>
        <begin position="150"/>
        <end position="151"/>
    </location>
    <ligand>
        <name>dUMP</name>
        <dbReference type="ChEBI" id="CHEBI:246422"/>
        <note>ligand shared between dimeric partners</note>
    </ligand>
</feature>
<feature type="binding site" description="in other chain" evidence="1">
    <location>
        <begin position="190"/>
        <end position="193"/>
    </location>
    <ligand>
        <name>dUMP</name>
        <dbReference type="ChEBI" id="CHEBI:246422"/>
        <note>ligand shared between dimeric partners</note>
    </ligand>
</feature>
<feature type="binding site" evidence="1">
    <location>
        <position position="193"/>
    </location>
    <ligand>
        <name>(6R)-5,10-methylene-5,6,7,8-tetrahydrofolate</name>
        <dbReference type="ChEBI" id="CHEBI:15636"/>
    </ligand>
</feature>
<feature type="binding site" description="in other chain" evidence="1">
    <location>
        <position position="201"/>
    </location>
    <ligand>
        <name>dUMP</name>
        <dbReference type="ChEBI" id="CHEBI:246422"/>
        <note>ligand shared between dimeric partners</note>
    </ligand>
</feature>
<feature type="binding site" description="in other chain" evidence="1">
    <location>
        <begin position="231"/>
        <end position="233"/>
    </location>
    <ligand>
        <name>dUMP</name>
        <dbReference type="ChEBI" id="CHEBI:246422"/>
        <note>ligand shared between dimeric partners</note>
    </ligand>
</feature>
<feature type="binding site" evidence="1">
    <location>
        <position position="287"/>
    </location>
    <ligand>
        <name>(6R)-5,10-methylene-5,6,7,8-tetrahydrofolate</name>
        <dbReference type="ChEBI" id="CHEBI:15636"/>
    </ligand>
</feature>
<name>TYSY_PHYMT</name>
<comment type="function">
    <text evidence="1">Catalyzes the reductive methylation of 2'-deoxyuridine-5'-monophosphate (dUMP) to 2'-deoxythymidine-5'-monophosphate (dTMP) while utilizing 5,10-methylenetetrahydrofolate (mTHF) as the methyl donor and reductant in the reaction, yielding dihydrofolate (DHF) as a by-product. This enzymatic reaction provides an intracellular de novo source of dTMP, an essential precursor for DNA biosynthesis.</text>
</comment>
<comment type="catalytic activity">
    <reaction evidence="1">
        <text>dUMP + (6R)-5,10-methylene-5,6,7,8-tetrahydrofolate = 7,8-dihydrofolate + dTMP</text>
        <dbReference type="Rhea" id="RHEA:12104"/>
        <dbReference type="ChEBI" id="CHEBI:15636"/>
        <dbReference type="ChEBI" id="CHEBI:57451"/>
        <dbReference type="ChEBI" id="CHEBI:63528"/>
        <dbReference type="ChEBI" id="CHEBI:246422"/>
        <dbReference type="EC" id="2.1.1.45"/>
    </reaction>
</comment>
<comment type="pathway">
    <text evidence="1">Pyrimidine metabolism; dTTP biosynthesis.</text>
</comment>
<comment type="subunit">
    <text evidence="1">Homodimer.</text>
</comment>
<comment type="subcellular location">
    <subcellularLocation>
        <location evidence="1">Cytoplasm</location>
    </subcellularLocation>
</comment>
<comment type="similarity">
    <text evidence="1">Belongs to the thymidylate synthase family. Bacterial-type ThyA subfamily.</text>
</comment>
<proteinExistence type="inferred from homology"/>
<accession>B3QZX0</accession>
<organism>
    <name type="scientific">Phytoplasma mali (strain AT)</name>
    <dbReference type="NCBI Taxonomy" id="482235"/>
    <lineage>
        <taxon>Bacteria</taxon>
        <taxon>Bacillati</taxon>
        <taxon>Mycoplasmatota</taxon>
        <taxon>Mollicutes</taxon>
        <taxon>Acholeplasmatales</taxon>
        <taxon>Acholeplasmataceae</taxon>
        <taxon>Candidatus Phytoplasma</taxon>
        <taxon>16SrX (Apple proliferation group)</taxon>
    </lineage>
</organism>
<reference key="1">
    <citation type="journal article" date="2008" name="BMC Genomics">
        <title>The linear chromosome of the plant-pathogenic mycoplasma 'Candidatus Phytoplasma mali'.</title>
        <authorList>
            <person name="Kube M."/>
            <person name="Schneider B."/>
            <person name="Kuhl H."/>
            <person name="Dandekar T."/>
            <person name="Heitmann K."/>
            <person name="Migdoll A.M."/>
            <person name="Reinhardt R."/>
            <person name="Seemueller E."/>
        </authorList>
    </citation>
    <scope>NUCLEOTIDE SEQUENCE [LARGE SCALE GENOMIC DNA]</scope>
    <source>
        <strain>AT</strain>
    </source>
</reference>
<sequence>MQAYLNLCRDILNYGKKKIDRTKTGTRSIFGYQMRFNLEKGFPLLTTKKMNFKAIIHELLWFIKGDTNIRYLVQNNVNIWNEWPYQKYCNSNFFQNLTLQEFIDKIIIDEKFAKIHGDLGPIYGHQWRNFQGIDQLTDLISEIKKNPHSRRLILTAWDPTVIKDMLLPPCHVMIQCYVEKNKISMQLYQRSGDVFLGIPFNIASYSLLLIIIAQCTGLKPFEFIHTIGDAHIYNNHIEQIQKQIKRIPKKLPIMTLNPHIIDINQFTFNDFNLEKYESYGILKGVVAV</sequence>
<protein>
    <recommendedName>
        <fullName evidence="1">Thymidylate synthase</fullName>
        <shortName evidence="1">TS</shortName>
        <shortName evidence="1">TSase</shortName>
        <ecNumber evidence="1">2.1.1.45</ecNumber>
    </recommendedName>
</protein>